<evidence type="ECO:0000255" key="1">
    <source>
        <dbReference type="HAMAP-Rule" id="MF_00792"/>
    </source>
</evidence>
<accession>A2BYX6</accession>
<comment type="function">
    <text evidence="1">Catalyzes the two-electron reduction of biliverdin IX-alpha at the C15 methine bridge.</text>
</comment>
<comment type="catalytic activity">
    <reaction evidence="1">
        <text>15,16-dihydrobiliverdin + oxidized 2[4Fe-4S]-[ferredoxin] = biliverdin IXalpha + reduced 2[4Fe-4S]-[ferredoxin] + 2 H(+)</text>
        <dbReference type="Rhea" id="RHEA:10168"/>
        <dbReference type="Rhea" id="RHEA-COMP:10002"/>
        <dbReference type="Rhea" id="RHEA-COMP:10004"/>
        <dbReference type="ChEBI" id="CHEBI:15378"/>
        <dbReference type="ChEBI" id="CHEBI:33722"/>
        <dbReference type="ChEBI" id="CHEBI:33723"/>
        <dbReference type="ChEBI" id="CHEBI:57899"/>
        <dbReference type="ChEBI" id="CHEBI:57991"/>
        <dbReference type="EC" id="1.3.7.2"/>
    </reaction>
</comment>
<comment type="similarity">
    <text evidence="1">Belongs to the HY2 family.</text>
</comment>
<organism>
    <name type="scientific">Prochlorococcus marinus (strain MIT 9515)</name>
    <dbReference type="NCBI Taxonomy" id="167542"/>
    <lineage>
        <taxon>Bacteria</taxon>
        <taxon>Bacillati</taxon>
        <taxon>Cyanobacteriota</taxon>
        <taxon>Cyanophyceae</taxon>
        <taxon>Synechococcales</taxon>
        <taxon>Prochlorococcaceae</taxon>
        <taxon>Prochlorococcus</taxon>
    </lineage>
</organism>
<feature type="chain" id="PRO_1000046920" description="15,16-dihydrobiliverdin:ferredoxin oxidoreductase">
    <location>
        <begin position="1"/>
        <end position="236"/>
    </location>
</feature>
<proteinExistence type="inferred from homology"/>
<dbReference type="EC" id="1.3.7.2" evidence="1"/>
<dbReference type="EMBL" id="CP000552">
    <property type="protein sequence ID" value="ABM72987.1"/>
    <property type="molecule type" value="Genomic_DNA"/>
</dbReference>
<dbReference type="RefSeq" id="WP_011821073.1">
    <property type="nucleotide sequence ID" value="NC_008817.1"/>
</dbReference>
<dbReference type="SMR" id="A2BYX6"/>
<dbReference type="STRING" id="167542.P9515_17801"/>
<dbReference type="GeneID" id="60201825"/>
<dbReference type="KEGG" id="pmc:P9515_17801"/>
<dbReference type="eggNOG" id="ENOG502Z8J9">
    <property type="taxonomic scope" value="Bacteria"/>
</dbReference>
<dbReference type="HOGENOM" id="CLU_086208_0_0_3"/>
<dbReference type="OrthoDB" id="527390at2"/>
<dbReference type="Proteomes" id="UP000001589">
    <property type="component" value="Chromosome"/>
</dbReference>
<dbReference type="GO" id="GO:0050617">
    <property type="term" value="F:15,16-dihydrobiliverdin:ferredoxin oxidoreductase activity"/>
    <property type="evidence" value="ECO:0007669"/>
    <property type="project" value="UniProtKB-UniRule"/>
</dbReference>
<dbReference type="GO" id="GO:0050897">
    <property type="term" value="F:cobalt ion binding"/>
    <property type="evidence" value="ECO:0007669"/>
    <property type="project" value="InterPro"/>
</dbReference>
<dbReference type="GO" id="GO:0010024">
    <property type="term" value="P:phytochromobilin biosynthetic process"/>
    <property type="evidence" value="ECO:0007669"/>
    <property type="project" value="InterPro"/>
</dbReference>
<dbReference type="Gene3D" id="3.40.1500.20">
    <property type="match status" value="1"/>
</dbReference>
<dbReference type="HAMAP" id="MF_00792">
    <property type="entry name" value="PebA"/>
    <property type="match status" value="1"/>
</dbReference>
<dbReference type="InterPro" id="IPR023658">
    <property type="entry name" value="DiHydbiliverdin_OxRdtase"/>
</dbReference>
<dbReference type="InterPro" id="IPR009249">
    <property type="entry name" value="Ferredoxin-dep_bilin_Rdtase"/>
</dbReference>
<dbReference type="NCBIfam" id="NF009719">
    <property type="entry name" value="PRK13246.1"/>
    <property type="match status" value="1"/>
</dbReference>
<dbReference type="PANTHER" id="PTHR34557">
    <property type="entry name" value="PHYTOCHROMOBILIN:FERREDOXIN OXIDOREDUCTASE, CHLOROPLASTIC"/>
    <property type="match status" value="1"/>
</dbReference>
<dbReference type="PANTHER" id="PTHR34557:SF1">
    <property type="entry name" value="PHYTOCHROMOBILIN:FERREDOXIN OXIDOREDUCTASE, CHLOROPLASTIC"/>
    <property type="match status" value="1"/>
</dbReference>
<dbReference type="Pfam" id="PF05996">
    <property type="entry name" value="Fe_bilin_red"/>
    <property type="match status" value="1"/>
</dbReference>
<reference key="1">
    <citation type="journal article" date="2007" name="PLoS Genet.">
        <title>Patterns and implications of gene gain and loss in the evolution of Prochlorococcus.</title>
        <authorList>
            <person name="Kettler G.C."/>
            <person name="Martiny A.C."/>
            <person name="Huang K."/>
            <person name="Zucker J."/>
            <person name="Coleman M.L."/>
            <person name="Rodrigue S."/>
            <person name="Chen F."/>
            <person name="Lapidus A."/>
            <person name="Ferriera S."/>
            <person name="Johnson J."/>
            <person name="Steglich C."/>
            <person name="Church G.M."/>
            <person name="Richardson P."/>
            <person name="Chisholm S.W."/>
        </authorList>
    </citation>
    <scope>NUCLEOTIDE SEQUENCE [LARGE SCALE GENOMIC DNA]</scope>
    <source>
        <strain>MIT 9515</strain>
    </source>
</reference>
<name>PEBA_PROM5</name>
<gene>
    <name evidence="1" type="primary">pebA</name>
    <name type="ordered locus">P9515_17801</name>
</gene>
<protein>
    <recommendedName>
        <fullName evidence="1">15,16-dihydrobiliverdin:ferredoxin oxidoreductase</fullName>
        <ecNumber evidence="1">1.3.7.2</ecNumber>
    </recommendedName>
</protein>
<keyword id="KW-0560">Oxidoreductase</keyword>
<sequence length="236" mass="28433">MFDSLKNFLKKSIEDLDGKELEISKEFQEYHNKDSKYIIKNWLFESPQYRKWRVTKLDGGDKLQVFNTVAYPNFKSESPILGADILWFGTSQKLLAIFDYQPLIQEKKYLYQYCSSLDFIKKKYSVFDNNKMKNIYDSKKYFSPWVMICRGNKLNLDRDLNSIFYLFVSDYLRINKLNQNNQFLNYEQIKNKQIDYDKYSAEKDPADKLFKSFFGENWTCNFINNFLFTLNNYSKD</sequence>